<proteinExistence type="inferred from homology"/>
<comment type="function">
    <text evidence="1">Component of the acetyl coenzyme A carboxylase (ACC) complex. First, biotin carboxylase catalyzes the carboxylation of biotin on its carrier protein (BCCP) and then the CO(2) group is transferred by the carboxyltransferase to acetyl-CoA to form malonyl-CoA.</text>
</comment>
<comment type="catalytic activity">
    <reaction evidence="1">
        <text>N(6)-carboxybiotinyl-L-lysyl-[protein] + acetyl-CoA = N(6)-biotinyl-L-lysyl-[protein] + malonyl-CoA</text>
        <dbReference type="Rhea" id="RHEA:54728"/>
        <dbReference type="Rhea" id="RHEA-COMP:10505"/>
        <dbReference type="Rhea" id="RHEA-COMP:10506"/>
        <dbReference type="ChEBI" id="CHEBI:57288"/>
        <dbReference type="ChEBI" id="CHEBI:57384"/>
        <dbReference type="ChEBI" id="CHEBI:83144"/>
        <dbReference type="ChEBI" id="CHEBI:83145"/>
        <dbReference type="EC" id="2.1.3.15"/>
    </reaction>
</comment>
<comment type="pathway">
    <text evidence="1">Lipid metabolism; malonyl-CoA biosynthesis; malonyl-CoA from acetyl-CoA: step 1/1.</text>
</comment>
<comment type="subunit">
    <text evidence="1">Acetyl-CoA carboxylase is a heterohexamer composed of biotin carboxyl carrier protein (AccB), biotin carboxylase (AccC) and two subunits each of ACCase subunit alpha (AccA) and ACCase subunit beta (AccD).</text>
</comment>
<comment type="subcellular location">
    <subcellularLocation>
        <location evidence="1">Cytoplasm</location>
    </subcellularLocation>
</comment>
<comment type="similarity">
    <text evidence="1">Belongs to the AccA family.</text>
</comment>
<accession>Q667K5</accession>
<evidence type="ECO:0000255" key="1">
    <source>
        <dbReference type="HAMAP-Rule" id="MF_00823"/>
    </source>
</evidence>
<evidence type="ECO:0000255" key="2">
    <source>
        <dbReference type="PROSITE-ProRule" id="PRU01137"/>
    </source>
</evidence>
<keyword id="KW-0067">ATP-binding</keyword>
<keyword id="KW-0963">Cytoplasm</keyword>
<keyword id="KW-0275">Fatty acid biosynthesis</keyword>
<keyword id="KW-0276">Fatty acid metabolism</keyword>
<keyword id="KW-0444">Lipid biosynthesis</keyword>
<keyword id="KW-0443">Lipid metabolism</keyword>
<keyword id="KW-0547">Nucleotide-binding</keyword>
<keyword id="KW-0808">Transferase</keyword>
<sequence>MSLNFLDFEQPIAELEAKIDSLTAVSRQDEKLDINLDEEVQRLREKSVELTRKIFSDLGAWQIAQLARHPRRPYTLDYIANIFTDFEELAGDRAYADDKAIVGGIARLDGRPVMIIGHQKGRETKEKIRRNFGMPAPEGYRKALRLMEMAERFKLPIITFIDTPGAYPGVGAEERGQSEAIARNLREMSRLNVPIVCTVIGEGGSGGALAIGVGDKVNMLQYSTYSVISPEGCASILWKSADKAPLAAEAMGITAHRLKELKMIDSVIPEPLGGAHRDYAAIAISLKAQLLADLNDLDVLNDEELLNRRYQRLMNYGYC</sequence>
<reference key="1">
    <citation type="journal article" date="2004" name="Proc. Natl. Acad. Sci. U.S.A.">
        <title>Insights into the evolution of Yersinia pestis through whole-genome comparison with Yersinia pseudotuberculosis.</title>
        <authorList>
            <person name="Chain P.S.G."/>
            <person name="Carniel E."/>
            <person name="Larimer F.W."/>
            <person name="Lamerdin J."/>
            <person name="Stoutland P.O."/>
            <person name="Regala W.M."/>
            <person name="Georgescu A.M."/>
            <person name="Vergez L.M."/>
            <person name="Land M.L."/>
            <person name="Motin V.L."/>
            <person name="Brubaker R.R."/>
            <person name="Fowler J."/>
            <person name="Hinnebusch J."/>
            <person name="Marceau M."/>
            <person name="Medigue C."/>
            <person name="Simonet M."/>
            <person name="Chenal-Francisque V."/>
            <person name="Souza B."/>
            <person name="Dacheux D."/>
            <person name="Elliott J.M."/>
            <person name="Derbise A."/>
            <person name="Hauser L.J."/>
            <person name="Garcia E."/>
        </authorList>
    </citation>
    <scope>NUCLEOTIDE SEQUENCE [LARGE SCALE GENOMIC DNA]</scope>
    <source>
        <strain>IP32953</strain>
    </source>
</reference>
<organism>
    <name type="scientific">Yersinia pseudotuberculosis serotype I (strain IP32953)</name>
    <dbReference type="NCBI Taxonomy" id="273123"/>
    <lineage>
        <taxon>Bacteria</taxon>
        <taxon>Pseudomonadati</taxon>
        <taxon>Pseudomonadota</taxon>
        <taxon>Gammaproteobacteria</taxon>
        <taxon>Enterobacterales</taxon>
        <taxon>Yersiniaceae</taxon>
        <taxon>Yersinia</taxon>
    </lineage>
</organism>
<name>ACCA_YERPS</name>
<dbReference type="EC" id="2.1.3.15" evidence="1"/>
<dbReference type="EMBL" id="BX936398">
    <property type="protein sequence ID" value="CAH22225.1"/>
    <property type="molecule type" value="Genomic_DNA"/>
</dbReference>
<dbReference type="RefSeq" id="WP_002212147.1">
    <property type="nucleotide sequence ID" value="NZ_CP009712.1"/>
</dbReference>
<dbReference type="SMR" id="Q667K5"/>
<dbReference type="GeneID" id="57977501"/>
<dbReference type="KEGG" id="ypo:BZ17_3634"/>
<dbReference type="KEGG" id="yps:YPTB2987"/>
<dbReference type="PATRIC" id="fig|273123.14.peg.3815"/>
<dbReference type="UniPathway" id="UPA00655">
    <property type="reaction ID" value="UER00711"/>
</dbReference>
<dbReference type="Proteomes" id="UP000001011">
    <property type="component" value="Chromosome"/>
</dbReference>
<dbReference type="GO" id="GO:0009317">
    <property type="term" value="C:acetyl-CoA carboxylase complex"/>
    <property type="evidence" value="ECO:0007669"/>
    <property type="project" value="InterPro"/>
</dbReference>
<dbReference type="GO" id="GO:0003989">
    <property type="term" value="F:acetyl-CoA carboxylase activity"/>
    <property type="evidence" value="ECO:0007669"/>
    <property type="project" value="InterPro"/>
</dbReference>
<dbReference type="GO" id="GO:0005524">
    <property type="term" value="F:ATP binding"/>
    <property type="evidence" value="ECO:0007669"/>
    <property type="project" value="UniProtKB-KW"/>
</dbReference>
<dbReference type="GO" id="GO:0016743">
    <property type="term" value="F:carboxyl- or carbamoyltransferase activity"/>
    <property type="evidence" value="ECO:0007669"/>
    <property type="project" value="UniProtKB-UniRule"/>
</dbReference>
<dbReference type="GO" id="GO:0006633">
    <property type="term" value="P:fatty acid biosynthetic process"/>
    <property type="evidence" value="ECO:0007669"/>
    <property type="project" value="UniProtKB-KW"/>
</dbReference>
<dbReference type="GO" id="GO:2001295">
    <property type="term" value="P:malonyl-CoA biosynthetic process"/>
    <property type="evidence" value="ECO:0007669"/>
    <property type="project" value="UniProtKB-UniRule"/>
</dbReference>
<dbReference type="FunFam" id="3.90.226.10:FF:000008">
    <property type="entry name" value="Acetyl-coenzyme A carboxylase carboxyl transferase subunit alpha"/>
    <property type="match status" value="1"/>
</dbReference>
<dbReference type="Gene3D" id="3.90.226.10">
    <property type="entry name" value="2-enoyl-CoA Hydratase, Chain A, domain 1"/>
    <property type="match status" value="1"/>
</dbReference>
<dbReference type="HAMAP" id="MF_00823">
    <property type="entry name" value="AcetylCoA_CT_alpha"/>
    <property type="match status" value="1"/>
</dbReference>
<dbReference type="InterPro" id="IPR001095">
    <property type="entry name" value="Acetyl_CoA_COase_a_su"/>
</dbReference>
<dbReference type="InterPro" id="IPR029045">
    <property type="entry name" value="ClpP/crotonase-like_dom_sf"/>
</dbReference>
<dbReference type="InterPro" id="IPR011763">
    <property type="entry name" value="COA_CT_C"/>
</dbReference>
<dbReference type="NCBIfam" id="TIGR00513">
    <property type="entry name" value="accA"/>
    <property type="match status" value="1"/>
</dbReference>
<dbReference type="NCBIfam" id="NF041504">
    <property type="entry name" value="AccA_sub"/>
    <property type="match status" value="1"/>
</dbReference>
<dbReference type="NCBIfam" id="NF004344">
    <property type="entry name" value="PRK05724.1"/>
    <property type="match status" value="1"/>
</dbReference>
<dbReference type="PANTHER" id="PTHR42853">
    <property type="entry name" value="ACETYL-COENZYME A CARBOXYLASE CARBOXYL TRANSFERASE SUBUNIT ALPHA"/>
    <property type="match status" value="1"/>
</dbReference>
<dbReference type="PANTHER" id="PTHR42853:SF3">
    <property type="entry name" value="ACETYL-COENZYME A CARBOXYLASE CARBOXYL TRANSFERASE SUBUNIT ALPHA, CHLOROPLASTIC"/>
    <property type="match status" value="1"/>
</dbReference>
<dbReference type="Pfam" id="PF03255">
    <property type="entry name" value="ACCA"/>
    <property type="match status" value="1"/>
</dbReference>
<dbReference type="PRINTS" id="PR01069">
    <property type="entry name" value="ACCCTRFRASEA"/>
</dbReference>
<dbReference type="SUPFAM" id="SSF52096">
    <property type="entry name" value="ClpP/crotonase"/>
    <property type="match status" value="1"/>
</dbReference>
<dbReference type="PROSITE" id="PS50989">
    <property type="entry name" value="COA_CT_CTER"/>
    <property type="match status" value="1"/>
</dbReference>
<protein>
    <recommendedName>
        <fullName evidence="1">Acetyl-coenzyme A carboxylase carboxyl transferase subunit alpha</fullName>
        <shortName evidence="1">ACCase subunit alpha</shortName>
        <shortName evidence="1">Acetyl-CoA carboxylase carboxyltransferase subunit alpha</shortName>
        <ecNumber evidence="1">2.1.3.15</ecNumber>
    </recommendedName>
</protein>
<feature type="chain" id="PRO_0000223862" description="Acetyl-coenzyme A carboxylase carboxyl transferase subunit alpha">
    <location>
        <begin position="1"/>
        <end position="319"/>
    </location>
</feature>
<feature type="domain" description="CoA carboxyltransferase C-terminal" evidence="2">
    <location>
        <begin position="35"/>
        <end position="296"/>
    </location>
</feature>
<gene>
    <name evidence="1" type="primary">accA</name>
    <name type="ordered locus">YPTB2987</name>
</gene>